<name>Y547_METJA</name>
<feature type="chain" id="PRO_0000106925" description="Uncharacterized ATP-binding protein MJ0547">
    <location>
        <begin position="1"/>
        <end position="264"/>
    </location>
</feature>
<feature type="binding site" evidence="1">
    <location>
        <begin position="15"/>
        <end position="22"/>
    </location>
    <ligand>
        <name>ATP</name>
        <dbReference type="ChEBI" id="CHEBI:30616"/>
    </ligand>
</feature>
<keyword id="KW-0067">ATP-binding</keyword>
<keyword id="KW-0547">Nucleotide-binding</keyword>
<keyword id="KW-1185">Reference proteome</keyword>
<gene>
    <name type="ordered locus">MJ0547</name>
</gene>
<proteinExistence type="inferred from homology"/>
<comment type="similarity">
    <text evidence="2">Belongs to the ParA family. MinD subfamily.</text>
</comment>
<protein>
    <recommendedName>
        <fullName>Uncharacterized ATP-binding protein MJ0547</fullName>
    </recommendedName>
</protein>
<sequence>MVTLMAIAIAIASGKGGTGKTTISANLAVALAKFGKKVAVLDADIAMANLELIMGLEGKPVTLNDVLAGKADIKDAIYEGPEGVLVIPAGVSLEKFRRAKPEKLEEVLKAIHDLVEILIIDCPAGIGKETLIAISSADGLIVVVNPEISSISDALKIIAITKRLGTDIIGAIVNRVSNESTELGVKAIETILEVPVIGVVPEDPHVRKAAAFGTPLVIMYPDSPAAQAIMEIAAKLIGAKYEAQLKKKKESFISKFIKGLFGRR</sequence>
<reference key="1">
    <citation type="journal article" date="1996" name="Science">
        <title>Complete genome sequence of the methanogenic archaeon, Methanococcus jannaschii.</title>
        <authorList>
            <person name="Bult C.J."/>
            <person name="White O."/>
            <person name="Olsen G.J."/>
            <person name="Zhou L."/>
            <person name="Fleischmann R.D."/>
            <person name="Sutton G.G."/>
            <person name="Blake J.A."/>
            <person name="FitzGerald L.M."/>
            <person name="Clayton R.A."/>
            <person name="Gocayne J.D."/>
            <person name="Kerlavage A.R."/>
            <person name="Dougherty B.A."/>
            <person name="Tomb J.-F."/>
            <person name="Adams M.D."/>
            <person name="Reich C.I."/>
            <person name="Overbeek R."/>
            <person name="Kirkness E.F."/>
            <person name="Weinstock K.G."/>
            <person name="Merrick J.M."/>
            <person name="Glodek A."/>
            <person name="Scott J.L."/>
            <person name="Geoghagen N.S.M."/>
            <person name="Weidman J.F."/>
            <person name="Fuhrmann J.L."/>
            <person name="Nguyen D."/>
            <person name="Utterback T.R."/>
            <person name="Kelley J.M."/>
            <person name="Peterson J.D."/>
            <person name="Sadow P.W."/>
            <person name="Hanna M.C."/>
            <person name="Cotton M.D."/>
            <person name="Roberts K.M."/>
            <person name="Hurst M.A."/>
            <person name="Kaine B.P."/>
            <person name="Borodovsky M."/>
            <person name="Klenk H.-P."/>
            <person name="Fraser C.M."/>
            <person name="Smith H.O."/>
            <person name="Woese C.R."/>
            <person name="Venter J.C."/>
        </authorList>
    </citation>
    <scope>NUCLEOTIDE SEQUENCE [LARGE SCALE GENOMIC DNA]</scope>
    <source>
        <strain>ATCC 43067 / DSM 2661 / JAL-1 / JCM 10045 / NBRC 100440</strain>
    </source>
</reference>
<dbReference type="EMBL" id="L77117">
    <property type="protein sequence ID" value="AAB98539.1"/>
    <property type="molecule type" value="Genomic_DNA"/>
</dbReference>
<dbReference type="PIR" id="C64368">
    <property type="entry name" value="C64368"/>
</dbReference>
<dbReference type="SMR" id="Q57967"/>
<dbReference type="FunCoup" id="Q57967">
    <property type="interactions" value="73"/>
</dbReference>
<dbReference type="STRING" id="243232.MJ_0547"/>
<dbReference type="PaxDb" id="243232-MJ_0547"/>
<dbReference type="EnsemblBacteria" id="AAB98539">
    <property type="protein sequence ID" value="AAB98539"/>
    <property type="gene ID" value="MJ_0547"/>
</dbReference>
<dbReference type="KEGG" id="mja:MJ_0547"/>
<dbReference type="eggNOG" id="arCOG00589">
    <property type="taxonomic scope" value="Archaea"/>
</dbReference>
<dbReference type="HOGENOM" id="CLU_037612_0_3_2"/>
<dbReference type="InParanoid" id="Q57967"/>
<dbReference type="PhylomeDB" id="Q57967"/>
<dbReference type="Proteomes" id="UP000000805">
    <property type="component" value="Chromosome"/>
</dbReference>
<dbReference type="GO" id="GO:0009898">
    <property type="term" value="C:cytoplasmic side of plasma membrane"/>
    <property type="evidence" value="ECO:0000318"/>
    <property type="project" value="GO_Central"/>
</dbReference>
<dbReference type="GO" id="GO:0005829">
    <property type="term" value="C:cytosol"/>
    <property type="evidence" value="ECO:0000318"/>
    <property type="project" value="GO_Central"/>
</dbReference>
<dbReference type="GO" id="GO:0005524">
    <property type="term" value="F:ATP binding"/>
    <property type="evidence" value="ECO:0000318"/>
    <property type="project" value="GO_Central"/>
</dbReference>
<dbReference type="GO" id="GO:0016887">
    <property type="term" value="F:ATP hydrolysis activity"/>
    <property type="evidence" value="ECO:0000318"/>
    <property type="project" value="GO_Central"/>
</dbReference>
<dbReference type="CDD" id="cd02036">
    <property type="entry name" value="MinD"/>
    <property type="match status" value="1"/>
</dbReference>
<dbReference type="FunFam" id="3.40.50.300:FF:000285">
    <property type="entry name" value="Sporulation initiation inhibitor Soj"/>
    <property type="match status" value="1"/>
</dbReference>
<dbReference type="Gene3D" id="3.40.50.300">
    <property type="entry name" value="P-loop containing nucleotide triphosphate hydrolases"/>
    <property type="match status" value="1"/>
</dbReference>
<dbReference type="InterPro" id="IPR002586">
    <property type="entry name" value="CobQ/CobB/MinD/ParA_Nub-bd_dom"/>
</dbReference>
<dbReference type="InterPro" id="IPR010224">
    <property type="entry name" value="MinD_archaea"/>
</dbReference>
<dbReference type="InterPro" id="IPR025501">
    <property type="entry name" value="MinD_FleN"/>
</dbReference>
<dbReference type="InterPro" id="IPR027417">
    <property type="entry name" value="P-loop_NTPase"/>
</dbReference>
<dbReference type="InterPro" id="IPR050625">
    <property type="entry name" value="ParA/MinD_ATPase"/>
</dbReference>
<dbReference type="NCBIfam" id="TIGR01969">
    <property type="entry name" value="minD_arch"/>
    <property type="match status" value="1"/>
</dbReference>
<dbReference type="PANTHER" id="PTHR43384:SF10">
    <property type="entry name" value="ATPASE INVOLVED IN CHROMOSOME PARTITIONING, PARA_MIND FAMILY"/>
    <property type="match status" value="1"/>
</dbReference>
<dbReference type="PANTHER" id="PTHR43384">
    <property type="entry name" value="SEPTUM SITE-DETERMINING PROTEIN MIND HOMOLOG, CHLOROPLASTIC-RELATED"/>
    <property type="match status" value="1"/>
</dbReference>
<dbReference type="Pfam" id="PF01656">
    <property type="entry name" value="CbiA"/>
    <property type="match status" value="1"/>
</dbReference>
<dbReference type="PIRSF" id="PIRSF003092">
    <property type="entry name" value="MinD"/>
    <property type="match status" value="1"/>
</dbReference>
<dbReference type="SUPFAM" id="SSF52540">
    <property type="entry name" value="P-loop containing nucleoside triphosphate hydrolases"/>
    <property type="match status" value="1"/>
</dbReference>
<accession>Q57967</accession>
<organism>
    <name type="scientific">Methanocaldococcus jannaschii (strain ATCC 43067 / DSM 2661 / JAL-1 / JCM 10045 / NBRC 100440)</name>
    <name type="common">Methanococcus jannaschii</name>
    <dbReference type="NCBI Taxonomy" id="243232"/>
    <lineage>
        <taxon>Archaea</taxon>
        <taxon>Methanobacteriati</taxon>
        <taxon>Methanobacteriota</taxon>
        <taxon>Methanomada group</taxon>
        <taxon>Methanococci</taxon>
        <taxon>Methanococcales</taxon>
        <taxon>Methanocaldococcaceae</taxon>
        <taxon>Methanocaldococcus</taxon>
    </lineage>
</organism>
<evidence type="ECO:0000250" key="1">
    <source>
        <dbReference type="UniProtKB" id="Q72H90"/>
    </source>
</evidence>
<evidence type="ECO:0000305" key="2"/>